<keyword id="KW-0479">Metal-binding</keyword>
<keyword id="KW-0560">Oxidoreductase</keyword>
<keyword id="KW-0862">Zinc</keyword>
<gene>
    <name evidence="2" type="primary">msrB</name>
    <name type="ordered locus">ECP_1726</name>
</gene>
<evidence type="ECO:0000250" key="1"/>
<evidence type="ECO:0000255" key="2">
    <source>
        <dbReference type="HAMAP-Rule" id="MF_01400"/>
    </source>
</evidence>
<evidence type="ECO:0000255" key="3">
    <source>
        <dbReference type="PROSITE-ProRule" id="PRU01126"/>
    </source>
</evidence>
<name>MSRB_ECOL5</name>
<organism>
    <name type="scientific">Escherichia coli O6:K15:H31 (strain 536 / UPEC)</name>
    <dbReference type="NCBI Taxonomy" id="362663"/>
    <lineage>
        <taxon>Bacteria</taxon>
        <taxon>Pseudomonadati</taxon>
        <taxon>Pseudomonadota</taxon>
        <taxon>Gammaproteobacteria</taxon>
        <taxon>Enterobacterales</taxon>
        <taxon>Enterobacteriaceae</taxon>
        <taxon>Escherichia</taxon>
    </lineage>
</organism>
<dbReference type="EC" id="1.8.4.12" evidence="2"/>
<dbReference type="EMBL" id="CP000247">
    <property type="protein sequence ID" value="ABG69729.1"/>
    <property type="molecule type" value="Genomic_DNA"/>
</dbReference>
<dbReference type="RefSeq" id="WP_001284618.1">
    <property type="nucleotide sequence ID" value="NC_008253.1"/>
</dbReference>
<dbReference type="SMR" id="Q0TH50"/>
<dbReference type="GeneID" id="93775987"/>
<dbReference type="KEGG" id="ecp:ECP_1726"/>
<dbReference type="HOGENOM" id="CLU_031040_8_5_6"/>
<dbReference type="Proteomes" id="UP000009182">
    <property type="component" value="Chromosome"/>
</dbReference>
<dbReference type="GO" id="GO:0005737">
    <property type="term" value="C:cytoplasm"/>
    <property type="evidence" value="ECO:0007669"/>
    <property type="project" value="TreeGrafter"/>
</dbReference>
<dbReference type="GO" id="GO:0033743">
    <property type="term" value="F:peptide-methionine (R)-S-oxide reductase activity"/>
    <property type="evidence" value="ECO:0007669"/>
    <property type="project" value="UniProtKB-UniRule"/>
</dbReference>
<dbReference type="GO" id="GO:0008270">
    <property type="term" value="F:zinc ion binding"/>
    <property type="evidence" value="ECO:0007669"/>
    <property type="project" value="UniProtKB-UniRule"/>
</dbReference>
<dbReference type="GO" id="GO:0030091">
    <property type="term" value="P:protein repair"/>
    <property type="evidence" value="ECO:0007669"/>
    <property type="project" value="InterPro"/>
</dbReference>
<dbReference type="GO" id="GO:0006979">
    <property type="term" value="P:response to oxidative stress"/>
    <property type="evidence" value="ECO:0007669"/>
    <property type="project" value="InterPro"/>
</dbReference>
<dbReference type="FunFam" id="2.170.150.20:FF:000001">
    <property type="entry name" value="Peptide methionine sulfoxide reductase MsrB"/>
    <property type="match status" value="1"/>
</dbReference>
<dbReference type="Gene3D" id="2.170.150.20">
    <property type="entry name" value="Peptide methionine sulfoxide reductase"/>
    <property type="match status" value="1"/>
</dbReference>
<dbReference type="HAMAP" id="MF_01400">
    <property type="entry name" value="MsrB"/>
    <property type="match status" value="1"/>
</dbReference>
<dbReference type="InterPro" id="IPR028427">
    <property type="entry name" value="Met_Sox_Rdtase_MsrB"/>
</dbReference>
<dbReference type="InterPro" id="IPR002579">
    <property type="entry name" value="Met_Sox_Rdtase_MsrB_dom"/>
</dbReference>
<dbReference type="InterPro" id="IPR011057">
    <property type="entry name" value="Mss4-like_sf"/>
</dbReference>
<dbReference type="NCBIfam" id="TIGR00357">
    <property type="entry name" value="peptide-methionine (R)-S-oxide reductase MsrB"/>
    <property type="match status" value="1"/>
</dbReference>
<dbReference type="PANTHER" id="PTHR10173">
    <property type="entry name" value="METHIONINE SULFOXIDE REDUCTASE"/>
    <property type="match status" value="1"/>
</dbReference>
<dbReference type="PANTHER" id="PTHR10173:SF52">
    <property type="entry name" value="METHIONINE-R-SULFOXIDE REDUCTASE B1"/>
    <property type="match status" value="1"/>
</dbReference>
<dbReference type="Pfam" id="PF01641">
    <property type="entry name" value="SelR"/>
    <property type="match status" value="1"/>
</dbReference>
<dbReference type="SUPFAM" id="SSF51316">
    <property type="entry name" value="Mss4-like"/>
    <property type="match status" value="1"/>
</dbReference>
<dbReference type="PROSITE" id="PS51790">
    <property type="entry name" value="MSRB"/>
    <property type="match status" value="1"/>
</dbReference>
<reference key="1">
    <citation type="journal article" date="2006" name="Mol. Microbiol.">
        <title>Role of pathogenicity island-associated integrases in the genome plasticity of uropathogenic Escherichia coli strain 536.</title>
        <authorList>
            <person name="Hochhut B."/>
            <person name="Wilde C."/>
            <person name="Balling G."/>
            <person name="Middendorf B."/>
            <person name="Dobrindt U."/>
            <person name="Brzuszkiewicz E."/>
            <person name="Gottschalk G."/>
            <person name="Carniel E."/>
            <person name="Hacker J."/>
        </authorList>
    </citation>
    <scope>NUCLEOTIDE SEQUENCE [LARGE SCALE GENOMIC DNA]</scope>
    <source>
        <strain>536 / UPEC</strain>
    </source>
</reference>
<comment type="catalytic activity">
    <reaction evidence="2">
        <text>L-methionyl-[protein] + [thioredoxin]-disulfide + H2O = L-methionyl-(R)-S-oxide-[protein] + [thioredoxin]-dithiol</text>
        <dbReference type="Rhea" id="RHEA:24164"/>
        <dbReference type="Rhea" id="RHEA-COMP:10698"/>
        <dbReference type="Rhea" id="RHEA-COMP:10700"/>
        <dbReference type="Rhea" id="RHEA-COMP:12313"/>
        <dbReference type="Rhea" id="RHEA-COMP:12314"/>
        <dbReference type="ChEBI" id="CHEBI:15377"/>
        <dbReference type="ChEBI" id="CHEBI:16044"/>
        <dbReference type="ChEBI" id="CHEBI:29950"/>
        <dbReference type="ChEBI" id="CHEBI:45764"/>
        <dbReference type="ChEBI" id="CHEBI:50058"/>
        <dbReference type="EC" id="1.8.4.12"/>
    </reaction>
</comment>
<comment type="cofactor">
    <cofactor evidence="2">
        <name>Zn(2+)</name>
        <dbReference type="ChEBI" id="CHEBI:29105"/>
    </cofactor>
    <text evidence="2">Binds 1 zinc ion per subunit. The zinc ion is important for the structural integrity of the protein.</text>
</comment>
<comment type="similarity">
    <text evidence="2">Belongs to the MsrB Met sulfoxide reductase family.</text>
</comment>
<protein>
    <recommendedName>
        <fullName evidence="2">Peptide methionine sulfoxide reductase MsrB</fullName>
        <ecNumber evidence="2">1.8.4.12</ecNumber>
    </recommendedName>
    <alternativeName>
        <fullName evidence="2">Peptide-methionine (R)-S-oxide reductase</fullName>
    </alternativeName>
</protein>
<accession>Q0TH50</accession>
<proteinExistence type="inferred from homology"/>
<sequence length="137" mass="15451">MANKPSAEELKKNLSEMQFYVTQNHGTEPPFTGRLLHNKRDGVYHCLICDAPLFHSQTKYDSGCGWPSFYEPVSEESIRYIKDLSHGMQRIEIRCGNCDAHLGHVFPDGPQPTGERYCVNSASLRFTDGENGEEING</sequence>
<feature type="initiator methionine" description="Removed" evidence="1">
    <location>
        <position position="1"/>
    </location>
</feature>
<feature type="chain" id="PRO_1000068271" description="Peptide methionine sulfoxide reductase MsrB">
    <location>
        <begin position="2"/>
        <end position="137"/>
    </location>
</feature>
<feature type="domain" description="MsrB" evidence="3">
    <location>
        <begin position="7"/>
        <end position="129"/>
    </location>
</feature>
<feature type="active site" description="Nucleophile" evidence="3">
    <location>
        <position position="118"/>
    </location>
</feature>
<feature type="binding site" evidence="3">
    <location>
        <position position="46"/>
    </location>
    <ligand>
        <name>Zn(2+)</name>
        <dbReference type="ChEBI" id="CHEBI:29105"/>
    </ligand>
</feature>
<feature type="binding site" evidence="3">
    <location>
        <position position="49"/>
    </location>
    <ligand>
        <name>Zn(2+)</name>
        <dbReference type="ChEBI" id="CHEBI:29105"/>
    </ligand>
</feature>
<feature type="binding site" evidence="3">
    <location>
        <position position="95"/>
    </location>
    <ligand>
        <name>Zn(2+)</name>
        <dbReference type="ChEBI" id="CHEBI:29105"/>
    </ligand>
</feature>
<feature type="binding site" evidence="3">
    <location>
        <position position="98"/>
    </location>
    <ligand>
        <name>Zn(2+)</name>
        <dbReference type="ChEBI" id="CHEBI:29105"/>
    </ligand>
</feature>